<dbReference type="EC" id="3.6.4.-" evidence="1"/>
<dbReference type="EMBL" id="Y00447">
    <property type="protein sequence ID" value="CAA68501.1"/>
    <property type="molecule type" value="Genomic_DNA"/>
</dbReference>
<dbReference type="EMBL" id="D84318">
    <property type="protein sequence ID" value="BAA12315.1"/>
    <property type="molecule type" value="Genomic_DNA"/>
</dbReference>
<dbReference type="EMBL" id="AB004534">
    <property type="protein sequence ID" value="BAA21389.1"/>
    <property type="molecule type" value="Genomic_DNA"/>
</dbReference>
<dbReference type="EMBL" id="CU329671">
    <property type="protein sequence ID" value="CAC37502.1"/>
    <property type="molecule type" value="Genomic_DNA"/>
</dbReference>
<dbReference type="PIR" id="A26836">
    <property type="entry name" value="A26836"/>
</dbReference>
<dbReference type="RefSeq" id="NP_595618.1">
    <property type="nucleotide sequence ID" value="NM_001021513.2"/>
</dbReference>
<dbReference type="SMR" id="P10989"/>
<dbReference type="BioGRID" id="276589">
    <property type="interactions" value="53"/>
</dbReference>
<dbReference type="FunCoup" id="P10989">
    <property type="interactions" value="238"/>
</dbReference>
<dbReference type="IntAct" id="P10989">
    <property type="interactions" value="4"/>
</dbReference>
<dbReference type="MINT" id="P10989"/>
<dbReference type="STRING" id="284812.P10989"/>
<dbReference type="iPTMnet" id="P10989"/>
<dbReference type="PaxDb" id="4896-SPBC32H8.12c.1"/>
<dbReference type="EnsemblFungi" id="SPBC32H8.12c.1">
    <property type="protein sequence ID" value="SPBC32H8.12c.1:pep"/>
    <property type="gene ID" value="SPBC32H8.12c"/>
</dbReference>
<dbReference type="GeneID" id="2540051"/>
<dbReference type="KEGG" id="spo:2540051"/>
<dbReference type="PomBase" id="SPBC32H8.12c">
    <property type="gene designation" value="act1"/>
</dbReference>
<dbReference type="VEuPathDB" id="FungiDB:SPBC32H8.12c"/>
<dbReference type="eggNOG" id="KOG0676">
    <property type="taxonomic scope" value="Eukaryota"/>
</dbReference>
<dbReference type="HOGENOM" id="CLU_027965_0_2_1"/>
<dbReference type="InParanoid" id="P10989"/>
<dbReference type="OMA" id="FHTTAER"/>
<dbReference type="PhylomeDB" id="P10989"/>
<dbReference type="Reactome" id="R-SPO-8980692">
    <property type="pathway name" value="RHOA GTPase cycle"/>
</dbReference>
<dbReference type="Reactome" id="R-SPO-9013026">
    <property type="pathway name" value="RHOB GTPase cycle"/>
</dbReference>
<dbReference type="PRO" id="PR:P10989"/>
<dbReference type="Proteomes" id="UP000002485">
    <property type="component" value="Chromosome II"/>
</dbReference>
<dbReference type="GO" id="GO:0030479">
    <property type="term" value="C:actin cortical patch"/>
    <property type="evidence" value="ECO:0000314"/>
    <property type="project" value="PomBase"/>
</dbReference>
<dbReference type="GO" id="GO:0015629">
    <property type="term" value="C:actin cytoskeleton"/>
    <property type="evidence" value="ECO:0000318"/>
    <property type="project" value="GO_Central"/>
</dbReference>
<dbReference type="GO" id="GO:0005884">
    <property type="term" value="C:actin filament"/>
    <property type="evidence" value="ECO:0000304"/>
    <property type="project" value="PomBase"/>
</dbReference>
<dbReference type="GO" id="GO:0032153">
    <property type="term" value="C:cell division site"/>
    <property type="evidence" value="ECO:0007005"/>
    <property type="project" value="PomBase"/>
</dbReference>
<dbReference type="GO" id="GO:0051286">
    <property type="term" value="C:cell tip"/>
    <property type="evidence" value="ECO:0007005"/>
    <property type="project" value="PomBase"/>
</dbReference>
<dbReference type="GO" id="GO:0031011">
    <property type="term" value="C:Ino80 complex"/>
    <property type="evidence" value="ECO:0000314"/>
    <property type="project" value="PomBase"/>
</dbReference>
<dbReference type="GO" id="GO:0043332">
    <property type="term" value="C:mating projection tip"/>
    <property type="evidence" value="ECO:0000314"/>
    <property type="project" value="PomBase"/>
</dbReference>
<dbReference type="GO" id="GO:0120106">
    <property type="term" value="C:mitotic actomyosin contractile ring, distal actin filament layer"/>
    <property type="evidence" value="ECO:0000314"/>
    <property type="project" value="PomBase"/>
</dbReference>
<dbReference type="GO" id="GO:0120105">
    <property type="term" value="C:mitotic actomyosin contractile ring, intermediate layer"/>
    <property type="evidence" value="ECO:0000314"/>
    <property type="project" value="PomBase"/>
</dbReference>
<dbReference type="GO" id="GO:0120104">
    <property type="term" value="C:mitotic actomyosin contractile ring, proximal layer"/>
    <property type="evidence" value="ECO:0000314"/>
    <property type="project" value="PomBase"/>
</dbReference>
<dbReference type="GO" id="GO:0035267">
    <property type="term" value="C:NuA4 histone acetyltransferase complex"/>
    <property type="evidence" value="ECO:0000314"/>
    <property type="project" value="PomBase"/>
</dbReference>
<dbReference type="GO" id="GO:0048471">
    <property type="term" value="C:perinuclear region of cytoplasm"/>
    <property type="evidence" value="ECO:0000314"/>
    <property type="project" value="PomBase"/>
</dbReference>
<dbReference type="GO" id="GO:0005628">
    <property type="term" value="C:prospore membrane"/>
    <property type="evidence" value="ECO:0000314"/>
    <property type="project" value="PomBase"/>
</dbReference>
<dbReference type="GO" id="GO:0000812">
    <property type="term" value="C:Swr1 complex"/>
    <property type="evidence" value="ECO:0000314"/>
    <property type="project" value="PomBase"/>
</dbReference>
<dbReference type="GO" id="GO:0005524">
    <property type="term" value="F:ATP binding"/>
    <property type="evidence" value="ECO:0007669"/>
    <property type="project" value="UniProtKB-KW"/>
</dbReference>
<dbReference type="GO" id="GO:0016787">
    <property type="term" value="F:hydrolase activity"/>
    <property type="evidence" value="ECO:0007669"/>
    <property type="project" value="UniProtKB-KW"/>
</dbReference>
<dbReference type="GO" id="GO:0005200">
    <property type="term" value="F:structural constituent of cytoskeleton"/>
    <property type="evidence" value="ECO:0000303"/>
    <property type="project" value="PomBase"/>
</dbReference>
<dbReference type="GO" id="GO:0006338">
    <property type="term" value="P:chromatin remodeling"/>
    <property type="evidence" value="ECO:0000314"/>
    <property type="project" value="PomBase"/>
</dbReference>
<dbReference type="GO" id="GO:0140861">
    <property type="term" value="P:DNA repair-dependent chromatin remodeling"/>
    <property type="evidence" value="ECO:0000305"/>
    <property type="project" value="PomBase"/>
</dbReference>
<dbReference type="GO" id="GO:0006897">
    <property type="term" value="P:endocytosis"/>
    <property type="evidence" value="ECO:0000315"/>
    <property type="project" value="PomBase"/>
</dbReference>
<dbReference type="GO" id="GO:0045815">
    <property type="term" value="P:transcription initiation-coupled chromatin remodeling"/>
    <property type="evidence" value="ECO:0000305"/>
    <property type="project" value="PomBase"/>
</dbReference>
<dbReference type="CDD" id="cd10224">
    <property type="entry name" value="ASKHA_NBD_actin"/>
    <property type="match status" value="1"/>
</dbReference>
<dbReference type="FunFam" id="2.30.36.70:FF:000001">
    <property type="entry name" value="Actin, alpha skeletal muscle"/>
    <property type="match status" value="1"/>
</dbReference>
<dbReference type="FunFam" id="3.30.420.40:FF:000131">
    <property type="entry name" value="Actin, alpha skeletal muscle"/>
    <property type="match status" value="1"/>
</dbReference>
<dbReference type="FunFam" id="3.30.420.40:FF:000291">
    <property type="entry name" value="Actin, alpha skeletal muscle"/>
    <property type="match status" value="1"/>
</dbReference>
<dbReference type="FunFam" id="3.90.640.10:FF:000001">
    <property type="entry name" value="Actin, muscle"/>
    <property type="match status" value="1"/>
</dbReference>
<dbReference type="FunFam" id="3.30.420.40:FF:000058">
    <property type="entry name" value="Putative actin-related protein 5"/>
    <property type="match status" value="1"/>
</dbReference>
<dbReference type="Gene3D" id="3.30.420.40">
    <property type="match status" value="2"/>
</dbReference>
<dbReference type="Gene3D" id="3.90.640.10">
    <property type="entry name" value="Actin, Chain A, domain 4"/>
    <property type="match status" value="1"/>
</dbReference>
<dbReference type="InterPro" id="IPR004000">
    <property type="entry name" value="Actin"/>
</dbReference>
<dbReference type="InterPro" id="IPR020902">
    <property type="entry name" value="Actin/actin-like_CS"/>
</dbReference>
<dbReference type="InterPro" id="IPR004001">
    <property type="entry name" value="Actin_CS"/>
</dbReference>
<dbReference type="InterPro" id="IPR043129">
    <property type="entry name" value="ATPase_NBD"/>
</dbReference>
<dbReference type="PANTHER" id="PTHR11937">
    <property type="entry name" value="ACTIN"/>
    <property type="match status" value="1"/>
</dbReference>
<dbReference type="Pfam" id="PF00022">
    <property type="entry name" value="Actin"/>
    <property type="match status" value="1"/>
</dbReference>
<dbReference type="PRINTS" id="PR00190">
    <property type="entry name" value="ACTIN"/>
</dbReference>
<dbReference type="SMART" id="SM00268">
    <property type="entry name" value="ACTIN"/>
    <property type="match status" value="1"/>
</dbReference>
<dbReference type="SUPFAM" id="SSF53067">
    <property type="entry name" value="Actin-like ATPase domain"/>
    <property type="match status" value="2"/>
</dbReference>
<dbReference type="PROSITE" id="PS00406">
    <property type="entry name" value="ACTINS_1"/>
    <property type="match status" value="1"/>
</dbReference>
<dbReference type="PROSITE" id="PS00432">
    <property type="entry name" value="ACTINS_2"/>
    <property type="match status" value="1"/>
</dbReference>
<dbReference type="PROSITE" id="PS01132">
    <property type="entry name" value="ACTINS_ACT_LIKE"/>
    <property type="match status" value="1"/>
</dbReference>
<comment type="function">
    <text>Actins are highly conserved proteins that are involved in various types of cell motility and are ubiquitously expressed in all eukaryotic cells.</text>
</comment>
<comment type="catalytic activity">
    <reaction evidence="1">
        <text>ATP + H2O = ADP + phosphate + H(+)</text>
        <dbReference type="Rhea" id="RHEA:13065"/>
        <dbReference type="ChEBI" id="CHEBI:15377"/>
        <dbReference type="ChEBI" id="CHEBI:15378"/>
        <dbReference type="ChEBI" id="CHEBI:30616"/>
        <dbReference type="ChEBI" id="CHEBI:43474"/>
        <dbReference type="ChEBI" id="CHEBI:456216"/>
    </reaction>
</comment>
<comment type="interaction">
    <interactant intactId="EBI-617028">
        <id>P10989</id>
    </interactant>
    <interactant intactId="EBI-1152490">
        <id>O14188</id>
        <label>rng2</label>
    </interactant>
    <organismsDiffer>false</organismsDiffer>
    <experiments>3</experiments>
</comment>
<comment type="subcellular location">
    <subcellularLocation>
        <location>Cytoplasm</location>
        <location>Cytoskeleton</location>
    </subcellularLocation>
</comment>
<comment type="similarity">
    <text evidence="4">Belongs to the actin family.</text>
</comment>
<protein>
    <recommendedName>
        <fullName>Actin</fullName>
        <ecNumber evidence="1">3.6.4.-</ecNumber>
    </recommendedName>
</protein>
<feature type="chain" id="PRO_0000089007" description="Actin">
    <location>
        <begin position="1"/>
        <end position="375"/>
    </location>
</feature>
<feature type="modified residue" description="Phosphothreonine" evidence="2">
    <location>
        <position position="202"/>
    </location>
</feature>
<feature type="modified residue" description="Phosphoserine" evidence="2">
    <location>
        <position position="324"/>
    </location>
</feature>
<feature type="mutagenesis site" description="Causes a defect in the maintenance of cell polarity and septum organization." evidence="3">
    <original>G</original>
    <variation>D</variation>
    <location>
        <position position="273"/>
    </location>
</feature>
<organism>
    <name type="scientific">Schizosaccharomyces pombe (strain 972 / ATCC 24843)</name>
    <name type="common">Fission yeast</name>
    <dbReference type="NCBI Taxonomy" id="284812"/>
    <lineage>
        <taxon>Eukaryota</taxon>
        <taxon>Fungi</taxon>
        <taxon>Dikarya</taxon>
        <taxon>Ascomycota</taxon>
        <taxon>Taphrinomycotina</taxon>
        <taxon>Schizosaccharomycetes</taxon>
        <taxon>Schizosaccharomycetales</taxon>
        <taxon>Schizosaccharomycetaceae</taxon>
        <taxon>Schizosaccharomyces</taxon>
    </lineage>
</organism>
<sequence>MEEEIAALVIDNGSGMCKAGFAGDDAPRAVFPSIVGRPRHHGIMVGMGQKDSYVGDEAQSKRGILTLKYPIEHGIVNNWDDMEKIWHHTFYNELRVAPEEHPCLLTEAPLNPKSNREKMTQIIFETFNAPAFYVAIQAVLSLYASGRTTGIVLDSGDGVTHTVPIYEGYALPHAIMRLDLAGRDLTDYLMKILMERGYTFSTTAEREIVRDIKEKLCYVALDFEQELQTAAQSSSLEKSYELPDGQVITIGNERFRAPEALFQPSALGLENAGIHEATYNSIMKCDVDIRKDLYGNVVMSGGTTMYPGIADRMQKEIQALAPSSMKVKIVAPPERKYSVWIGGSILASLSTFQQMWISKQEYDESGPGIVYRKCF</sequence>
<evidence type="ECO:0000250" key="1">
    <source>
        <dbReference type="UniProtKB" id="P60010"/>
    </source>
</evidence>
<evidence type="ECO:0000269" key="2">
    <source>
    </source>
</evidence>
<evidence type="ECO:0000269" key="3">
    <source>
    </source>
</evidence>
<evidence type="ECO:0000305" key="4"/>
<gene>
    <name type="primary">act1</name>
    <name type="synonym">cps8</name>
    <name type="ORF">pi012</name>
    <name type="ORF">SPBC32H8.12c</name>
</gene>
<accession>P10989</accession>
<accession>Q10288</accession>
<name>ACT_SCHPO</name>
<reference key="1">
    <citation type="journal article" date="1987" name="Nucleic Acids Res.">
        <title>A single intronless action gene in the fission yeast Schizosaccharomyces pombe: nucleotide sequence and transcripts formed in homologous and heterologous yeast.</title>
        <authorList>
            <person name="Mertins P."/>
            <person name="Gallwitz D."/>
        </authorList>
    </citation>
    <scope>NUCLEOTIDE SEQUENCE [GENOMIC DNA]</scope>
</reference>
<reference key="2">
    <citation type="journal article" date="1996" name="FEBS Lett.">
        <title>An actin point-mutation neighboring the 'hydrophobic plug' causes defects in the maintenance of cell polarity and septum organization in the fission yeast Schizosaccharomyces pombe.</title>
        <authorList>
            <person name="Ishiguro J."/>
            <person name="Kobayashi W."/>
        </authorList>
    </citation>
    <scope>NUCLEOTIDE SEQUENCE [GENOMIC DNA]</scope>
    <scope>MUTAGENESIS OF GLY-273</scope>
    <source>
        <strain>972 / ATCC 24843</strain>
    </source>
</reference>
<reference key="3">
    <citation type="journal article" date="2000" name="Yeast">
        <title>A 38 kb segment containing the cdc2 gene from the left arm of fission yeast chromosome II: sequence analysis and characterization of the genomic DNA and cDNAs encoded on the segment.</title>
        <authorList>
            <person name="Machida M."/>
            <person name="Yamazaki S."/>
            <person name="Kunihiro S."/>
            <person name="Tanaka T."/>
            <person name="Kushida N."/>
            <person name="Jinno K."/>
            <person name="Haikawa Y."/>
            <person name="Yamazaki J."/>
            <person name="Yamamoto S."/>
            <person name="Sekine M."/>
            <person name="Oguchi A."/>
            <person name="Nagai Y."/>
            <person name="Sakai M."/>
            <person name="Aoki K."/>
            <person name="Ogura K."/>
            <person name="Kudoh Y."/>
            <person name="Kikuchi H."/>
            <person name="Zhang M.Q."/>
            <person name="Yanagida M."/>
        </authorList>
    </citation>
    <scope>NUCLEOTIDE SEQUENCE [LARGE SCALE GENOMIC DNA]</scope>
    <source>
        <strain>972 / ATCC 24843</strain>
    </source>
</reference>
<reference key="4">
    <citation type="journal article" date="2002" name="Nature">
        <title>The genome sequence of Schizosaccharomyces pombe.</title>
        <authorList>
            <person name="Wood V."/>
            <person name="Gwilliam R."/>
            <person name="Rajandream M.A."/>
            <person name="Lyne M.H."/>
            <person name="Lyne R."/>
            <person name="Stewart A."/>
            <person name="Sgouros J.G."/>
            <person name="Peat N."/>
            <person name="Hayles J."/>
            <person name="Baker S.G."/>
            <person name="Basham D."/>
            <person name="Bowman S."/>
            <person name="Brooks K."/>
            <person name="Brown D."/>
            <person name="Brown S."/>
            <person name="Chillingworth T."/>
            <person name="Churcher C.M."/>
            <person name="Collins M."/>
            <person name="Connor R."/>
            <person name="Cronin A."/>
            <person name="Davis P."/>
            <person name="Feltwell T."/>
            <person name="Fraser A."/>
            <person name="Gentles S."/>
            <person name="Goble A."/>
            <person name="Hamlin N."/>
            <person name="Harris D.E."/>
            <person name="Hidalgo J."/>
            <person name="Hodgson G."/>
            <person name="Holroyd S."/>
            <person name="Hornsby T."/>
            <person name="Howarth S."/>
            <person name="Huckle E.J."/>
            <person name="Hunt S."/>
            <person name="Jagels K."/>
            <person name="James K.D."/>
            <person name="Jones L."/>
            <person name="Jones M."/>
            <person name="Leather S."/>
            <person name="McDonald S."/>
            <person name="McLean J."/>
            <person name="Mooney P."/>
            <person name="Moule S."/>
            <person name="Mungall K.L."/>
            <person name="Murphy L.D."/>
            <person name="Niblett D."/>
            <person name="Odell C."/>
            <person name="Oliver K."/>
            <person name="O'Neil S."/>
            <person name="Pearson D."/>
            <person name="Quail M.A."/>
            <person name="Rabbinowitsch E."/>
            <person name="Rutherford K.M."/>
            <person name="Rutter S."/>
            <person name="Saunders D."/>
            <person name="Seeger K."/>
            <person name="Sharp S."/>
            <person name="Skelton J."/>
            <person name="Simmonds M.N."/>
            <person name="Squares R."/>
            <person name="Squares S."/>
            <person name="Stevens K."/>
            <person name="Taylor K."/>
            <person name="Taylor R.G."/>
            <person name="Tivey A."/>
            <person name="Walsh S.V."/>
            <person name="Warren T."/>
            <person name="Whitehead S."/>
            <person name="Woodward J.R."/>
            <person name="Volckaert G."/>
            <person name="Aert R."/>
            <person name="Robben J."/>
            <person name="Grymonprez B."/>
            <person name="Weltjens I."/>
            <person name="Vanstreels E."/>
            <person name="Rieger M."/>
            <person name="Schaefer M."/>
            <person name="Mueller-Auer S."/>
            <person name="Gabel C."/>
            <person name="Fuchs M."/>
            <person name="Duesterhoeft A."/>
            <person name="Fritzc C."/>
            <person name="Holzer E."/>
            <person name="Moestl D."/>
            <person name="Hilbert H."/>
            <person name="Borzym K."/>
            <person name="Langer I."/>
            <person name="Beck A."/>
            <person name="Lehrach H."/>
            <person name="Reinhardt R."/>
            <person name="Pohl T.M."/>
            <person name="Eger P."/>
            <person name="Zimmermann W."/>
            <person name="Wedler H."/>
            <person name="Wambutt R."/>
            <person name="Purnelle B."/>
            <person name="Goffeau A."/>
            <person name="Cadieu E."/>
            <person name="Dreano S."/>
            <person name="Gloux S."/>
            <person name="Lelaure V."/>
            <person name="Mottier S."/>
            <person name="Galibert F."/>
            <person name="Aves S.J."/>
            <person name="Xiang Z."/>
            <person name="Hunt C."/>
            <person name="Moore K."/>
            <person name="Hurst S.M."/>
            <person name="Lucas M."/>
            <person name="Rochet M."/>
            <person name="Gaillardin C."/>
            <person name="Tallada V.A."/>
            <person name="Garzon A."/>
            <person name="Thode G."/>
            <person name="Daga R.R."/>
            <person name="Cruzado L."/>
            <person name="Jimenez J."/>
            <person name="Sanchez M."/>
            <person name="del Rey F."/>
            <person name="Benito J."/>
            <person name="Dominguez A."/>
            <person name="Revuelta J.L."/>
            <person name="Moreno S."/>
            <person name="Armstrong J."/>
            <person name="Forsburg S.L."/>
            <person name="Cerutti L."/>
            <person name="Lowe T."/>
            <person name="McCombie W.R."/>
            <person name="Paulsen I."/>
            <person name="Potashkin J."/>
            <person name="Shpakovski G.V."/>
            <person name="Ussery D."/>
            <person name="Barrell B.G."/>
            <person name="Nurse P."/>
        </authorList>
    </citation>
    <scope>NUCLEOTIDE SEQUENCE [LARGE SCALE GENOMIC DNA]</scope>
    <source>
        <strain>972 / ATCC 24843</strain>
    </source>
</reference>
<reference key="5">
    <citation type="journal article" date="2008" name="J. Proteome Res.">
        <title>Phosphoproteome analysis of fission yeast.</title>
        <authorList>
            <person name="Wilson-Grady J.T."/>
            <person name="Villen J."/>
            <person name="Gygi S.P."/>
        </authorList>
    </citation>
    <scope>PHOSPHORYLATION [LARGE SCALE ANALYSIS] AT THR-202 AND SER-324</scope>
    <scope>IDENTIFICATION BY MASS SPECTROMETRY</scope>
</reference>
<proteinExistence type="evidence at protein level"/>
<keyword id="KW-0067">ATP-binding</keyword>
<keyword id="KW-0963">Cytoplasm</keyword>
<keyword id="KW-0206">Cytoskeleton</keyword>
<keyword id="KW-0378">Hydrolase</keyword>
<keyword id="KW-0547">Nucleotide-binding</keyword>
<keyword id="KW-0597">Phosphoprotein</keyword>
<keyword id="KW-1185">Reference proteome</keyword>